<proteinExistence type="evidence at protein level"/>
<accession>Q79F14</accession>
<accession>Q796Z3</accession>
<sequence>MKKVLMAFIICLSLILSVLAAPPSGAKAESVHNPVVLVHGISGASYNFFAIKNYLISQGWQSNKLYAIDFYDKTGNNLNNGPQLASYVDRVLKETGAKKVDIVAHSMGGANTLYYIKYLGGGNKIQNVVTLGGANGLVSSTALPGTDPNQKILYTSIYSLNDQIVINSLSRLQGARNIQLYGIGHIGLLSNSQVNGYIKEGLNGGGLNTN</sequence>
<gene>
    <name type="primary">estB</name>
    <name evidence="3" type="synonym">lipB</name>
    <name evidence="4" type="synonym">yfiP</name>
    <name type="ordered locus">BSU08350</name>
</gene>
<name>ESTB_BACSU</name>
<feature type="signal peptide" evidence="1">
    <location>
        <begin position="1"/>
        <end position="28"/>
    </location>
</feature>
<feature type="chain" id="PRO_0000361687" description="Extracellular esterase EstB">
    <location>
        <begin position="29"/>
        <end position="210"/>
    </location>
</feature>
<feature type="active site" description="Nucleophile" evidence="6">
    <location>
        <position position="106"/>
    </location>
</feature>
<feature type="active site" description="Charge relay system" evidence="6">
    <location>
        <position position="162"/>
    </location>
</feature>
<feature type="active site" description="Charge relay system" evidence="6">
    <location>
        <position position="185"/>
    </location>
</feature>
<feature type="mutagenesis site" description="Enzyme activity changes to monoacylglycerol hydrolase. Marked decrease in temperature stability, decreased stability at pH 11 but increased stability at pH 5." evidence="1 2">
    <original>A</original>
    <variation>G</variation>
    <location>
        <position position="104"/>
    </location>
</feature>
<feature type="mutagenesis site" description="Complete loss of enzymatic activity." evidence="1">
    <original>S</original>
    <variation>C</variation>
    <location>
        <position position="106"/>
    </location>
</feature>
<feature type="mutagenesis site" description="Complete loss of enzymatic activity." evidence="1">
    <original>D</original>
    <variation>N</variation>
    <location>
        <position position="162"/>
    </location>
</feature>
<feature type="mutagenesis site" description="Complete loss of enzymatic activity." evidence="1">
    <original>H</original>
    <variation>N</variation>
    <location>
        <position position="185"/>
    </location>
</feature>
<evidence type="ECO:0000269" key="1">
    <source>
    </source>
</evidence>
<evidence type="ECO:0000269" key="2">
    <source>
    </source>
</evidence>
<evidence type="ECO:0000303" key="3">
    <source>
    </source>
</evidence>
<evidence type="ECO:0000303" key="4">
    <source>
    </source>
</evidence>
<evidence type="ECO:0000305" key="5"/>
<evidence type="ECO:0000305" key="6">
    <source>
    </source>
</evidence>
<protein>
    <recommendedName>
        <fullName>Extracellular esterase EstB</fullName>
        <ecNumber evidence="1">3.1.1.3</ecNumber>
    </recommendedName>
    <alternativeName>
        <fullName evidence="3">Extracellular esterase LipB</fullName>
    </alternativeName>
    <alternativeName>
        <fullName>Lipase B</fullName>
    </alternativeName>
    <alternativeName>
        <fullName>Triacylglycerol lipase</fullName>
    </alternativeName>
</protein>
<dbReference type="EC" id="3.1.1.3" evidence="1"/>
<dbReference type="EMBL" id="D78508">
    <property type="protein sequence ID" value="BAA11406.1"/>
    <property type="molecule type" value="Genomic_DNA"/>
</dbReference>
<dbReference type="EMBL" id="AL009126">
    <property type="protein sequence ID" value="CAB12664.1"/>
    <property type="molecule type" value="Genomic_DNA"/>
</dbReference>
<dbReference type="RefSeq" id="NP_388716.1">
    <property type="nucleotide sequence ID" value="NC_000964.3"/>
</dbReference>
<dbReference type="RefSeq" id="WP_003243184.1">
    <property type="nucleotide sequence ID" value="NZ_OZ025638.1"/>
</dbReference>
<dbReference type="SMR" id="Q79F14"/>
<dbReference type="FunCoup" id="Q79F14">
    <property type="interactions" value="111"/>
</dbReference>
<dbReference type="STRING" id="224308.BSU08350"/>
<dbReference type="ESTHER" id="bacsu-LIPB">
    <property type="family name" value="Lipase_2"/>
</dbReference>
<dbReference type="PaxDb" id="224308-BSU08350"/>
<dbReference type="EnsemblBacteria" id="CAB12664">
    <property type="protein sequence ID" value="CAB12664"/>
    <property type="gene ID" value="BSU_08350"/>
</dbReference>
<dbReference type="GeneID" id="939715"/>
<dbReference type="KEGG" id="bsu:BSU08350"/>
<dbReference type="PATRIC" id="fig|224308.179.peg.903"/>
<dbReference type="eggNOG" id="COG1075">
    <property type="taxonomic scope" value="Bacteria"/>
</dbReference>
<dbReference type="InParanoid" id="Q79F14"/>
<dbReference type="OrthoDB" id="503948at2"/>
<dbReference type="PhylomeDB" id="Q79F14"/>
<dbReference type="BioCyc" id="BSUB:BSU08350-MONOMER"/>
<dbReference type="BRENDA" id="3.1.1.23">
    <property type="organism ID" value="658"/>
</dbReference>
<dbReference type="SABIO-RK" id="Q79F14"/>
<dbReference type="Proteomes" id="UP000001570">
    <property type="component" value="Chromosome"/>
</dbReference>
<dbReference type="GO" id="GO:0005576">
    <property type="term" value="C:extracellular region"/>
    <property type="evidence" value="ECO:0007669"/>
    <property type="project" value="UniProtKB-SubCell"/>
</dbReference>
<dbReference type="GO" id="GO:0016298">
    <property type="term" value="F:lipase activity"/>
    <property type="evidence" value="ECO:0000318"/>
    <property type="project" value="GO_Central"/>
</dbReference>
<dbReference type="GO" id="GO:0004806">
    <property type="term" value="F:triacylglycerol lipase activity"/>
    <property type="evidence" value="ECO:0007669"/>
    <property type="project" value="UniProtKB-EC"/>
</dbReference>
<dbReference type="GO" id="GO:0016042">
    <property type="term" value="P:lipid catabolic process"/>
    <property type="evidence" value="ECO:0000318"/>
    <property type="project" value="GO_Central"/>
</dbReference>
<dbReference type="Gene3D" id="3.40.50.1820">
    <property type="entry name" value="alpha/beta hydrolase"/>
    <property type="match status" value="1"/>
</dbReference>
<dbReference type="InterPro" id="IPR029058">
    <property type="entry name" value="AB_hydrolase_fold"/>
</dbReference>
<dbReference type="InterPro" id="IPR002918">
    <property type="entry name" value="Lipase_EstA/Esterase_EstB"/>
</dbReference>
<dbReference type="PANTHER" id="PTHR32015">
    <property type="entry name" value="FASTING INDUCED LIPASE"/>
    <property type="match status" value="1"/>
</dbReference>
<dbReference type="PANTHER" id="PTHR32015:SF1">
    <property type="entry name" value="LIPASE"/>
    <property type="match status" value="1"/>
</dbReference>
<dbReference type="Pfam" id="PF01674">
    <property type="entry name" value="Lipase_2"/>
    <property type="match status" value="1"/>
</dbReference>
<dbReference type="SUPFAM" id="SSF53474">
    <property type="entry name" value="alpha/beta-Hydrolases"/>
    <property type="match status" value="1"/>
</dbReference>
<reference key="1">
    <citation type="journal article" date="1996" name="Gene">
        <title>The Bacillus subtilis chromosome region near 78 degrees contains the genes encoding a new two-component system, three ABC transporters and a lipase.</title>
        <authorList>
            <person name="Yamamoto H."/>
            <person name="Uchiyama S."/>
            <person name="Sekiguchi J."/>
        </authorList>
    </citation>
    <scope>NUCLEOTIDE SEQUENCE [GENOMIC DNA]</scope>
    <source>
        <strain>168 / AC327</strain>
    </source>
</reference>
<reference key="2">
    <citation type="journal article" date="1997" name="Nature">
        <title>The complete genome sequence of the Gram-positive bacterium Bacillus subtilis.</title>
        <authorList>
            <person name="Kunst F."/>
            <person name="Ogasawara N."/>
            <person name="Moszer I."/>
            <person name="Albertini A.M."/>
            <person name="Alloni G."/>
            <person name="Azevedo V."/>
            <person name="Bertero M.G."/>
            <person name="Bessieres P."/>
            <person name="Bolotin A."/>
            <person name="Borchert S."/>
            <person name="Borriss R."/>
            <person name="Boursier L."/>
            <person name="Brans A."/>
            <person name="Braun M."/>
            <person name="Brignell S.C."/>
            <person name="Bron S."/>
            <person name="Brouillet S."/>
            <person name="Bruschi C.V."/>
            <person name="Caldwell B."/>
            <person name="Capuano V."/>
            <person name="Carter N.M."/>
            <person name="Choi S.-K."/>
            <person name="Codani J.-J."/>
            <person name="Connerton I.F."/>
            <person name="Cummings N.J."/>
            <person name="Daniel R.A."/>
            <person name="Denizot F."/>
            <person name="Devine K.M."/>
            <person name="Duesterhoeft A."/>
            <person name="Ehrlich S.D."/>
            <person name="Emmerson P.T."/>
            <person name="Entian K.-D."/>
            <person name="Errington J."/>
            <person name="Fabret C."/>
            <person name="Ferrari E."/>
            <person name="Foulger D."/>
            <person name="Fritz C."/>
            <person name="Fujita M."/>
            <person name="Fujita Y."/>
            <person name="Fuma S."/>
            <person name="Galizzi A."/>
            <person name="Galleron N."/>
            <person name="Ghim S.-Y."/>
            <person name="Glaser P."/>
            <person name="Goffeau A."/>
            <person name="Golightly E.J."/>
            <person name="Grandi G."/>
            <person name="Guiseppi G."/>
            <person name="Guy B.J."/>
            <person name="Haga K."/>
            <person name="Haiech J."/>
            <person name="Harwood C.R."/>
            <person name="Henaut A."/>
            <person name="Hilbert H."/>
            <person name="Holsappel S."/>
            <person name="Hosono S."/>
            <person name="Hullo M.-F."/>
            <person name="Itaya M."/>
            <person name="Jones L.-M."/>
            <person name="Joris B."/>
            <person name="Karamata D."/>
            <person name="Kasahara Y."/>
            <person name="Klaerr-Blanchard M."/>
            <person name="Klein C."/>
            <person name="Kobayashi Y."/>
            <person name="Koetter P."/>
            <person name="Koningstein G."/>
            <person name="Krogh S."/>
            <person name="Kumano M."/>
            <person name="Kurita K."/>
            <person name="Lapidus A."/>
            <person name="Lardinois S."/>
            <person name="Lauber J."/>
            <person name="Lazarevic V."/>
            <person name="Lee S.-M."/>
            <person name="Levine A."/>
            <person name="Liu H."/>
            <person name="Masuda S."/>
            <person name="Mauel C."/>
            <person name="Medigue C."/>
            <person name="Medina N."/>
            <person name="Mellado R.P."/>
            <person name="Mizuno M."/>
            <person name="Moestl D."/>
            <person name="Nakai S."/>
            <person name="Noback M."/>
            <person name="Noone D."/>
            <person name="O'Reilly M."/>
            <person name="Ogawa K."/>
            <person name="Ogiwara A."/>
            <person name="Oudega B."/>
            <person name="Park S.-H."/>
            <person name="Parro V."/>
            <person name="Pohl T.M."/>
            <person name="Portetelle D."/>
            <person name="Porwollik S."/>
            <person name="Prescott A.M."/>
            <person name="Presecan E."/>
            <person name="Pujic P."/>
            <person name="Purnelle B."/>
            <person name="Rapoport G."/>
            <person name="Rey M."/>
            <person name="Reynolds S."/>
            <person name="Rieger M."/>
            <person name="Rivolta C."/>
            <person name="Rocha E."/>
            <person name="Roche B."/>
            <person name="Rose M."/>
            <person name="Sadaie Y."/>
            <person name="Sato T."/>
            <person name="Scanlan E."/>
            <person name="Schleich S."/>
            <person name="Schroeter R."/>
            <person name="Scoffone F."/>
            <person name="Sekiguchi J."/>
            <person name="Sekowska A."/>
            <person name="Seror S.J."/>
            <person name="Serror P."/>
            <person name="Shin B.-S."/>
            <person name="Soldo B."/>
            <person name="Sorokin A."/>
            <person name="Tacconi E."/>
            <person name="Takagi T."/>
            <person name="Takahashi H."/>
            <person name="Takemaru K."/>
            <person name="Takeuchi M."/>
            <person name="Tamakoshi A."/>
            <person name="Tanaka T."/>
            <person name="Terpstra P."/>
            <person name="Tognoni A."/>
            <person name="Tosato V."/>
            <person name="Uchiyama S."/>
            <person name="Vandenbol M."/>
            <person name="Vannier F."/>
            <person name="Vassarotti A."/>
            <person name="Viari A."/>
            <person name="Wambutt R."/>
            <person name="Wedler E."/>
            <person name="Wedler H."/>
            <person name="Weitzenegger T."/>
            <person name="Winters P."/>
            <person name="Wipat A."/>
            <person name="Yamamoto H."/>
            <person name="Yamane K."/>
            <person name="Yasumoto K."/>
            <person name="Yata K."/>
            <person name="Yoshida K."/>
            <person name="Yoshikawa H.-F."/>
            <person name="Zumstein E."/>
            <person name="Yoshikawa H."/>
            <person name="Danchin A."/>
        </authorList>
    </citation>
    <scope>NUCLEOTIDE SEQUENCE [LARGE SCALE GENOMIC DNA]</scope>
    <source>
        <strain>168</strain>
    </source>
</reference>
<reference key="3">
    <citation type="journal article" date="2000" name="Eur. J. Biochem.">
        <title>A novel extracellular esterase from Bacillus subtilis and its conversion to a monoacylglycerol hydrolase.</title>
        <authorList>
            <person name="Eggert T."/>
            <person name="Pencreac'h G."/>
            <person name="Douchet I."/>
            <person name="Verger R."/>
            <person name="Jaeger K.-E."/>
        </authorList>
    </citation>
    <scope>PROTEIN SEQUENCE OF 29-38</scope>
    <scope>FUNCTION</scope>
    <scope>CATALYTIC ACTIVITY</scope>
    <scope>ACTIVE SITE</scope>
    <scope>SUBSTRATE SPECIFICITY</scope>
    <scope>BIOPHYSICOCHEMICAL PROPERTIES</scope>
    <scope>SUBCELLULAR LOCATION</scope>
    <scope>MUTAGENESIS OF ALA-104; SER-106; ASP-162 AND HIS-185</scope>
    <source>
        <strain>168 / BCL 1050</strain>
    </source>
</reference>
<reference key="4">
    <citation type="journal article" date="2001" name="FEBS Lett.">
        <title>Lipolytic enzymes LipA and LipB from Bacillus subtilis differ in regulation of gene expression, biochemical properties, and three-dimensional structure.</title>
        <authorList>
            <person name="Eggert T."/>
            <person name="van Pouderoyen G."/>
            <person name="Dijkstra B.W."/>
            <person name="Jaeger K.-E."/>
        </authorList>
    </citation>
    <scope>SUBCELLULAR LOCATION</scope>
    <scope>INDUCTION</scope>
    <scope>MUTAGENESIS OF ALA-104</scope>
    <source>
        <strain>168 / BCL 1050</strain>
    </source>
</reference>
<keyword id="KW-0903">Direct protein sequencing</keyword>
<keyword id="KW-0378">Hydrolase</keyword>
<keyword id="KW-0442">Lipid degradation</keyword>
<keyword id="KW-0443">Lipid metabolism</keyword>
<keyword id="KW-1185">Reference proteome</keyword>
<keyword id="KW-0964">Secreted</keyword>
<keyword id="KW-0732">Signal</keyword>
<comment type="function">
    <text evidence="1">An esterase which preferentially hydrolyzes triacylglyceride substrates with short chain fatty acids (C3-C10) with the maximum activity towards tricaprylin (C8:0); essentially inactive on C18:1 or C18:4 substrates. Active against p-nitrophenylesters with fatty acid chain lengths from C6 to C18.</text>
</comment>
<comment type="catalytic activity">
    <reaction evidence="1">
        <text>a triacylglycerol + H2O = a diacylglycerol + a fatty acid + H(+)</text>
        <dbReference type="Rhea" id="RHEA:12044"/>
        <dbReference type="ChEBI" id="CHEBI:15377"/>
        <dbReference type="ChEBI" id="CHEBI:15378"/>
        <dbReference type="ChEBI" id="CHEBI:17855"/>
        <dbReference type="ChEBI" id="CHEBI:18035"/>
        <dbReference type="ChEBI" id="CHEBI:28868"/>
        <dbReference type="EC" id="3.1.1.3"/>
    </reaction>
</comment>
<comment type="biophysicochemical properties">
    <phDependence>
        <text evidence="1">Optimum pH is 11-12.</text>
    </phDependence>
    <temperatureDependence>
        <text evidence="1">Optimum temperature is 37 degrees Celsius. Stable up to 45 degrees Celsius.</text>
    </temperatureDependence>
</comment>
<comment type="subcellular location">
    <subcellularLocation>
        <location evidence="1 2">Secreted</location>
    </subcellularLocation>
</comment>
<comment type="induction">
    <text evidence="2">Induced in rich but not minimal media with glucose as carbon source (at protein level). Induced by growth on n-hexadecane and tributyrin.</text>
</comment>
<comment type="similarity">
    <text evidence="5">Belongs to the AB hydrolase superfamily.</text>
</comment>
<organism>
    <name type="scientific">Bacillus subtilis (strain 168)</name>
    <dbReference type="NCBI Taxonomy" id="224308"/>
    <lineage>
        <taxon>Bacteria</taxon>
        <taxon>Bacillati</taxon>
        <taxon>Bacillota</taxon>
        <taxon>Bacilli</taxon>
        <taxon>Bacillales</taxon>
        <taxon>Bacillaceae</taxon>
        <taxon>Bacillus</taxon>
    </lineage>
</organism>